<reference key="1">
    <citation type="journal article" date="2008" name="BMC Microbiol.">
        <title>Complete genome sequence of Treponema pallidum ssp. pallidum strain SS14 determined with oligonucleotide arrays.</title>
        <authorList>
            <person name="Matejkova P."/>
            <person name="Strouhal M."/>
            <person name="Smajs D."/>
            <person name="Norris S.J."/>
            <person name="Palzkill T."/>
            <person name="Petrosino J.F."/>
            <person name="Sodergren E."/>
            <person name="Norton J.E."/>
            <person name="Singh J."/>
            <person name="Richmond T.A."/>
            <person name="Molla M.N."/>
            <person name="Albert T.J."/>
            <person name="Weinstock G.M."/>
        </authorList>
    </citation>
    <scope>NUCLEOTIDE SEQUENCE [LARGE SCALE GENOMIC DNA]</scope>
    <source>
        <strain>SS14</strain>
    </source>
</reference>
<accession>B2S2T8</accession>
<organism>
    <name type="scientific">Treponema pallidum subsp. pallidum (strain SS14)</name>
    <dbReference type="NCBI Taxonomy" id="455434"/>
    <lineage>
        <taxon>Bacteria</taxon>
        <taxon>Pseudomonadati</taxon>
        <taxon>Spirochaetota</taxon>
        <taxon>Spirochaetia</taxon>
        <taxon>Spirochaetales</taxon>
        <taxon>Treponemataceae</taxon>
        <taxon>Treponema</taxon>
    </lineage>
</organism>
<evidence type="ECO:0000255" key="1">
    <source>
        <dbReference type="HAMAP-Rule" id="MF_00046"/>
    </source>
</evidence>
<sequence length="481" mass="53762">MKRGTLPKDVSGIKIHMIGIKGTGMSALAELLCARGARVSGSDVADVFYTDRILARLGVPVRTPFSCQNLADAPDVVIHSAAYVPEENDELAEAYRRGIPTLTYPEALGDISCARFSCGIAGVHGKTTTTAMIAQMVKELRLDASVLVGSAVSGNNDSCVVLNGDTFFIAETCEYRRHFLHFHPQKIVLTSVEHDHQDYYSSYEDILAAYFHYIDRLPQFGELFYCVDDQGVREVVQLAFFSRPDLVYVPYGERAWGDYGVSIHGVQDRKISFSLRGFAGEFYVALPGEHSVLNATGALALALSLVKKQYGEVTVEHLTALRKVLALFQGCRRRSEVLGEVRGILFMDDYGHHPTAIKKTLRGLKTFFPERRIVVDFMSHTYSRTAALLTEFAESFQDADVVILHEIYASAREVYQGEVNGEHLFELTKRKHRRVYYYEAVMQAVPFLQAELKEGDLFVTLGAGDNCKLGEVLFNYFKEEV</sequence>
<dbReference type="EC" id="6.3.2.8" evidence="1"/>
<dbReference type="EMBL" id="CP000805">
    <property type="protein sequence ID" value="ACD70767.1"/>
    <property type="molecule type" value="Genomic_DNA"/>
</dbReference>
<dbReference type="RefSeq" id="WP_010881789.1">
    <property type="nucleotide sequence ID" value="NC_010741.1"/>
</dbReference>
<dbReference type="SMR" id="B2S2T8"/>
<dbReference type="GeneID" id="93876120"/>
<dbReference type="KEGG" id="tpp:TPASS_0341"/>
<dbReference type="UniPathway" id="UPA00219"/>
<dbReference type="Proteomes" id="UP000001202">
    <property type="component" value="Chromosome"/>
</dbReference>
<dbReference type="GO" id="GO:0005737">
    <property type="term" value="C:cytoplasm"/>
    <property type="evidence" value="ECO:0007669"/>
    <property type="project" value="UniProtKB-SubCell"/>
</dbReference>
<dbReference type="GO" id="GO:0005524">
    <property type="term" value="F:ATP binding"/>
    <property type="evidence" value="ECO:0007669"/>
    <property type="project" value="UniProtKB-UniRule"/>
</dbReference>
<dbReference type="GO" id="GO:0008763">
    <property type="term" value="F:UDP-N-acetylmuramate-L-alanine ligase activity"/>
    <property type="evidence" value="ECO:0007669"/>
    <property type="project" value="UniProtKB-UniRule"/>
</dbReference>
<dbReference type="GO" id="GO:0051301">
    <property type="term" value="P:cell division"/>
    <property type="evidence" value="ECO:0007669"/>
    <property type="project" value="UniProtKB-KW"/>
</dbReference>
<dbReference type="GO" id="GO:0071555">
    <property type="term" value="P:cell wall organization"/>
    <property type="evidence" value="ECO:0007669"/>
    <property type="project" value="UniProtKB-KW"/>
</dbReference>
<dbReference type="GO" id="GO:0009252">
    <property type="term" value="P:peptidoglycan biosynthetic process"/>
    <property type="evidence" value="ECO:0007669"/>
    <property type="project" value="UniProtKB-UniRule"/>
</dbReference>
<dbReference type="GO" id="GO:0008360">
    <property type="term" value="P:regulation of cell shape"/>
    <property type="evidence" value="ECO:0007669"/>
    <property type="project" value="UniProtKB-KW"/>
</dbReference>
<dbReference type="Gene3D" id="3.90.190.20">
    <property type="entry name" value="Mur ligase, C-terminal domain"/>
    <property type="match status" value="1"/>
</dbReference>
<dbReference type="Gene3D" id="3.40.1190.10">
    <property type="entry name" value="Mur-like, catalytic domain"/>
    <property type="match status" value="1"/>
</dbReference>
<dbReference type="Gene3D" id="3.40.50.720">
    <property type="entry name" value="NAD(P)-binding Rossmann-like Domain"/>
    <property type="match status" value="1"/>
</dbReference>
<dbReference type="HAMAP" id="MF_00046">
    <property type="entry name" value="MurC"/>
    <property type="match status" value="1"/>
</dbReference>
<dbReference type="InterPro" id="IPR036565">
    <property type="entry name" value="Mur-like_cat_sf"/>
</dbReference>
<dbReference type="InterPro" id="IPR004101">
    <property type="entry name" value="Mur_ligase_C"/>
</dbReference>
<dbReference type="InterPro" id="IPR036615">
    <property type="entry name" value="Mur_ligase_C_dom_sf"/>
</dbReference>
<dbReference type="InterPro" id="IPR013221">
    <property type="entry name" value="Mur_ligase_cen"/>
</dbReference>
<dbReference type="InterPro" id="IPR000713">
    <property type="entry name" value="Mur_ligase_N"/>
</dbReference>
<dbReference type="InterPro" id="IPR050061">
    <property type="entry name" value="MurCDEF_pg_biosynth"/>
</dbReference>
<dbReference type="InterPro" id="IPR005758">
    <property type="entry name" value="UDP-N-AcMur_Ala_ligase_MurC"/>
</dbReference>
<dbReference type="NCBIfam" id="TIGR01082">
    <property type="entry name" value="murC"/>
    <property type="match status" value="1"/>
</dbReference>
<dbReference type="PANTHER" id="PTHR43445:SF3">
    <property type="entry name" value="UDP-N-ACETYLMURAMATE--L-ALANINE LIGASE"/>
    <property type="match status" value="1"/>
</dbReference>
<dbReference type="PANTHER" id="PTHR43445">
    <property type="entry name" value="UDP-N-ACETYLMURAMATE--L-ALANINE LIGASE-RELATED"/>
    <property type="match status" value="1"/>
</dbReference>
<dbReference type="Pfam" id="PF01225">
    <property type="entry name" value="Mur_ligase"/>
    <property type="match status" value="1"/>
</dbReference>
<dbReference type="Pfam" id="PF02875">
    <property type="entry name" value="Mur_ligase_C"/>
    <property type="match status" value="1"/>
</dbReference>
<dbReference type="Pfam" id="PF08245">
    <property type="entry name" value="Mur_ligase_M"/>
    <property type="match status" value="1"/>
</dbReference>
<dbReference type="SUPFAM" id="SSF51984">
    <property type="entry name" value="MurCD N-terminal domain"/>
    <property type="match status" value="1"/>
</dbReference>
<dbReference type="SUPFAM" id="SSF53623">
    <property type="entry name" value="MurD-like peptide ligases, catalytic domain"/>
    <property type="match status" value="1"/>
</dbReference>
<dbReference type="SUPFAM" id="SSF53244">
    <property type="entry name" value="MurD-like peptide ligases, peptide-binding domain"/>
    <property type="match status" value="1"/>
</dbReference>
<keyword id="KW-0067">ATP-binding</keyword>
<keyword id="KW-0131">Cell cycle</keyword>
<keyword id="KW-0132">Cell division</keyword>
<keyword id="KW-0133">Cell shape</keyword>
<keyword id="KW-0961">Cell wall biogenesis/degradation</keyword>
<keyword id="KW-0963">Cytoplasm</keyword>
<keyword id="KW-0436">Ligase</keyword>
<keyword id="KW-0547">Nucleotide-binding</keyword>
<keyword id="KW-0573">Peptidoglycan synthesis</keyword>
<feature type="chain" id="PRO_1000091147" description="UDP-N-acetylmuramate--L-alanine ligase">
    <location>
        <begin position="1"/>
        <end position="481"/>
    </location>
</feature>
<feature type="binding site" evidence="1">
    <location>
        <begin position="122"/>
        <end position="128"/>
    </location>
    <ligand>
        <name>ATP</name>
        <dbReference type="ChEBI" id="CHEBI:30616"/>
    </ligand>
</feature>
<gene>
    <name evidence="1" type="primary">murC</name>
    <name type="ordered locus">TPASS_0341</name>
</gene>
<comment type="function">
    <text evidence="1">Cell wall formation.</text>
</comment>
<comment type="catalytic activity">
    <reaction evidence="1">
        <text>UDP-N-acetyl-alpha-D-muramate + L-alanine + ATP = UDP-N-acetyl-alpha-D-muramoyl-L-alanine + ADP + phosphate + H(+)</text>
        <dbReference type="Rhea" id="RHEA:23372"/>
        <dbReference type="ChEBI" id="CHEBI:15378"/>
        <dbReference type="ChEBI" id="CHEBI:30616"/>
        <dbReference type="ChEBI" id="CHEBI:43474"/>
        <dbReference type="ChEBI" id="CHEBI:57972"/>
        <dbReference type="ChEBI" id="CHEBI:70757"/>
        <dbReference type="ChEBI" id="CHEBI:83898"/>
        <dbReference type="ChEBI" id="CHEBI:456216"/>
        <dbReference type="EC" id="6.3.2.8"/>
    </reaction>
</comment>
<comment type="pathway">
    <text evidence="1">Cell wall biogenesis; peptidoglycan biosynthesis.</text>
</comment>
<comment type="subcellular location">
    <subcellularLocation>
        <location evidence="1">Cytoplasm</location>
    </subcellularLocation>
</comment>
<comment type="similarity">
    <text evidence="1">Belongs to the MurCDEF family.</text>
</comment>
<name>MURC_TREPS</name>
<protein>
    <recommendedName>
        <fullName evidence="1">UDP-N-acetylmuramate--L-alanine ligase</fullName>
        <ecNumber evidence="1">6.3.2.8</ecNumber>
    </recommendedName>
    <alternativeName>
        <fullName evidence="1">UDP-N-acetylmuramoyl-L-alanine synthetase</fullName>
    </alternativeName>
</protein>
<proteinExistence type="inferred from homology"/>